<proteinExistence type="evidence at protein level"/>
<comment type="function">
    <text evidence="2 4 7">Responsible for the deacetylation of lysine residues on the N-terminal part of the core histones (H2A, H2B, H3 and H4) (Probable). Histone deacetylation gives a tag for epigenetic repression and plays an important role in transcriptional regulation, cell cycle progression and developmental events (Probable). Histone deacetylases act via the formation of large multiprotein complexes (PubMed:25922987). Involved in the regulation of flowering time by repressing FLC and AGL27/MAF1 expression (PubMed:25922987). Forms a histone deacetylase complex with HDA6, FLD and MSI4/FVE that represses FLC gene expression to control flowering time (PubMed:25922987). Unlike its tandem duplication HDA18, HDA5 does not seem to be required for the cellular patterning in the root epidermis (PubMed:16176989).</text>
</comment>
<comment type="catalytic activity">
    <reaction evidence="4">
        <text>N(6)-acetyl-L-lysyl-[histone] + H2O = L-lysyl-[histone] + acetate</text>
        <dbReference type="Rhea" id="RHEA:58196"/>
        <dbReference type="Rhea" id="RHEA-COMP:9845"/>
        <dbReference type="Rhea" id="RHEA-COMP:11338"/>
        <dbReference type="ChEBI" id="CHEBI:15377"/>
        <dbReference type="ChEBI" id="CHEBI:29969"/>
        <dbReference type="ChEBI" id="CHEBI:30089"/>
        <dbReference type="ChEBI" id="CHEBI:61930"/>
        <dbReference type="EC" id="3.5.1.98"/>
    </reaction>
    <physiologicalReaction direction="left-to-right" evidence="4">
        <dbReference type="Rhea" id="RHEA:58197"/>
    </physiologicalReaction>
</comment>
<comment type="cofactor">
    <cofactor evidence="1">
        <name>Zn(2+)</name>
        <dbReference type="ChEBI" id="CHEBI:29105"/>
    </cofactor>
    <text evidence="1">Binds 1 zinc ion per subunit.</text>
</comment>
<comment type="activity regulation">
    <text evidence="4">Inhibited by trichostatin A (TSA), a well-known histone deacetylase inhibitor.</text>
</comment>
<comment type="subunit">
    <text evidence="4">Interacts with HDA6.</text>
</comment>
<comment type="subcellular location">
    <subcellularLocation>
        <location evidence="3">Nucleus</location>
    </subcellularLocation>
    <subcellularLocation>
        <location evidence="3">Cytoplasm</location>
    </subcellularLocation>
</comment>
<comment type="alternative products">
    <event type="alternative splicing"/>
    <isoform>
        <id>Q8RX28-1</id>
        <name>1</name>
        <sequence type="displayed"/>
    </isoform>
    <text>A number of isoforms are produced. According to EST sequences.</text>
</comment>
<comment type="tissue specificity">
    <text evidence="3">Expressed in stems, leaves, flowers, siliques and mature seeds.</text>
</comment>
<comment type="disruption phenotype">
    <text evidence="4">Delayed flowering under both long-day (LD) and short-day (SD) conditions.</text>
</comment>
<comment type="similarity">
    <text evidence="6">Belongs to the histone deacetylase family. HD type 2 subfamily.</text>
</comment>
<comment type="sequence caution" evidence="6">
    <conflict type="erroneous gene model prediction">
        <sequence resource="EMBL-CDS" id="BAB10369"/>
    </conflict>
</comment>
<comment type="sequence caution" evidence="6">
    <conflict type="erroneous gene model prediction">
        <sequence resource="EMBL-CDS" id="BAB10370"/>
    </conflict>
</comment>
<evidence type="ECO:0000250" key="1">
    <source>
        <dbReference type="UniProtKB" id="Q8GXJ1"/>
    </source>
</evidence>
<evidence type="ECO:0000269" key="2">
    <source>
    </source>
</evidence>
<evidence type="ECO:0000269" key="3">
    <source>
    </source>
</evidence>
<evidence type="ECO:0000269" key="4">
    <source>
    </source>
</evidence>
<evidence type="ECO:0000303" key="5">
    <source>
    </source>
</evidence>
<evidence type="ECO:0000305" key="6"/>
<evidence type="ECO:0000305" key="7">
    <source>
    </source>
</evidence>
<evidence type="ECO:0000312" key="8">
    <source>
        <dbReference type="EMBL" id="AED97417.1"/>
    </source>
</evidence>
<evidence type="ECO:0000312" key="9">
    <source>
        <dbReference type="EMBL" id="BAB10369.1"/>
    </source>
</evidence>
<evidence type="ECO:0007744" key="10">
    <source>
    </source>
</evidence>
<protein>
    <recommendedName>
        <fullName evidence="5">Histone deacetylase 5</fullName>
        <ecNumber evidence="4">3.5.1.98</ecNumber>
    </recommendedName>
</protein>
<sequence length="660" mass="72723">MAMAGESSGKKIGDCDGKVAGNRQRKVGLIYDETMCKHDTPDGEDHPECPDRIRVIWEKLQLAGVSQRCVVLGSSKAEDKHLQLVHTKDHVNLVKSISTKQKDYRRNRIASQLNSIYLNGGSSEAAYLAAGSVVKLAEKVAEGELDCGFAIVRPPGHHAEADEAMGFCLFNNVAVAASFLLNERPDLGVKKILIVDWDVHHGNGTQKMFWKDPRVLFFSVHRHEYGGFYPAGDDGDYNMVGEGPGEGFNINVPWDQGRCGDADYLAAWDHILIPVAREFNPDVIFLSAGFDAAINDPLGGCCVTPYGYSVMLKKLMEFAQGKIVLALEGGYNLDSIAKSSLACVQVLLEDKQIQGPPEAYPFESTWRVIQAVRKRLCTYWPSLADELSWKLINQKTPTPIILISSSDSETEDNAQGLLDQMSKLSIENPQGTLLENHQVEPASTSWRADLAKVDVWYASFGSNMWKPRFLCYIQGGQVDGLKKVCVGSMDKSPPKETVWETFPHRLFFGRESSVGWGVGGVAFTNPLANLIDQTHMCLYRITLEQFNDVLSQENGLNVDSDSPVFDLAALQLVDNKGSILEAPLNSWYGNVVCLGKERDIPILTMTCTLSAVEKFKSGEIPIRPPAKAYANTLIRGLVEGGRLSKEEAEAYIDKAVSKPL</sequence>
<keyword id="KW-0007">Acetylation</keyword>
<keyword id="KW-0025">Alternative splicing</keyword>
<keyword id="KW-0156">Chromatin regulator</keyword>
<keyword id="KW-0963">Cytoplasm</keyword>
<keyword id="KW-0287">Flowering</keyword>
<keyword id="KW-0378">Hydrolase</keyword>
<keyword id="KW-0479">Metal-binding</keyword>
<keyword id="KW-0539">Nucleus</keyword>
<keyword id="KW-1185">Reference proteome</keyword>
<keyword id="KW-0678">Repressor</keyword>
<keyword id="KW-0804">Transcription</keyword>
<keyword id="KW-0805">Transcription regulation</keyword>
<keyword id="KW-0862">Zinc</keyword>
<reference key="1">
    <citation type="journal article" date="1997" name="DNA Res.">
        <title>Structural analysis of Arabidopsis thaliana chromosome 5. II. Sequence features of the regions of 1,044,062 bp covered by thirteen physically assigned P1 clones.</title>
        <authorList>
            <person name="Kotani H."/>
            <person name="Nakamura Y."/>
            <person name="Sato S."/>
            <person name="Kaneko T."/>
            <person name="Asamizu E."/>
            <person name="Miyajima N."/>
            <person name="Tabata S."/>
        </authorList>
    </citation>
    <scope>NUCLEOTIDE SEQUENCE [LARGE SCALE GENOMIC DNA]</scope>
    <source>
        <strain>cv. Columbia</strain>
    </source>
</reference>
<reference key="2">
    <citation type="journal article" date="2017" name="Plant J.">
        <title>Araport11: a complete reannotation of the Arabidopsis thaliana reference genome.</title>
        <authorList>
            <person name="Cheng C.Y."/>
            <person name="Krishnakumar V."/>
            <person name="Chan A.P."/>
            <person name="Thibaud-Nissen F."/>
            <person name="Schobel S."/>
            <person name="Town C.D."/>
        </authorList>
    </citation>
    <scope>GENOME REANNOTATION</scope>
    <source>
        <strain>cv. Columbia</strain>
    </source>
</reference>
<reference key="3">
    <citation type="journal article" date="2003" name="Science">
        <title>Empirical analysis of transcriptional activity in the Arabidopsis genome.</title>
        <authorList>
            <person name="Yamada K."/>
            <person name="Lim J."/>
            <person name="Dale J.M."/>
            <person name="Chen H."/>
            <person name="Shinn P."/>
            <person name="Palm C.J."/>
            <person name="Southwick A.M."/>
            <person name="Wu H.C."/>
            <person name="Kim C.J."/>
            <person name="Nguyen M."/>
            <person name="Pham P.K."/>
            <person name="Cheuk R.F."/>
            <person name="Karlin-Newmann G."/>
            <person name="Liu S.X."/>
            <person name="Lam B."/>
            <person name="Sakano H."/>
            <person name="Wu T."/>
            <person name="Yu G."/>
            <person name="Miranda M."/>
            <person name="Quach H.L."/>
            <person name="Tripp M."/>
            <person name="Chang C.H."/>
            <person name="Lee J.M."/>
            <person name="Toriumi M.J."/>
            <person name="Chan M.M."/>
            <person name="Tang C.C."/>
            <person name="Onodera C.S."/>
            <person name="Deng J.M."/>
            <person name="Akiyama K."/>
            <person name="Ansari Y."/>
            <person name="Arakawa T."/>
            <person name="Banh J."/>
            <person name="Banno F."/>
            <person name="Bowser L."/>
            <person name="Brooks S.Y."/>
            <person name="Carninci P."/>
            <person name="Chao Q."/>
            <person name="Choy N."/>
            <person name="Enju A."/>
            <person name="Goldsmith A.D."/>
            <person name="Gurjal M."/>
            <person name="Hansen N.F."/>
            <person name="Hayashizaki Y."/>
            <person name="Johnson-Hopson C."/>
            <person name="Hsuan V.W."/>
            <person name="Iida K."/>
            <person name="Karnes M."/>
            <person name="Khan S."/>
            <person name="Koesema E."/>
            <person name="Ishida J."/>
            <person name="Jiang P.X."/>
            <person name="Jones T."/>
            <person name="Kawai J."/>
            <person name="Kamiya A."/>
            <person name="Meyers C."/>
            <person name="Nakajima M."/>
            <person name="Narusaka M."/>
            <person name="Seki M."/>
            <person name="Sakurai T."/>
            <person name="Satou M."/>
            <person name="Tamse R."/>
            <person name="Vaysberg M."/>
            <person name="Wallender E.K."/>
            <person name="Wong C."/>
            <person name="Yamamura Y."/>
            <person name="Yuan S."/>
            <person name="Shinozaki K."/>
            <person name="Davis R.W."/>
            <person name="Theologis A."/>
            <person name="Ecker J.R."/>
        </authorList>
    </citation>
    <scope>NUCLEOTIDE SEQUENCE [LARGE SCALE MRNA]</scope>
    <source>
        <strain>cv. Columbia</strain>
    </source>
</reference>
<reference key="4">
    <citation type="journal article" date="2002" name="Nucleic Acids Res.">
        <title>Analysis of histone acetyltransferase and histone deacetylase families of Arabidopsis thaliana suggests functional diversification of chromatin modification among multicellular eukaryotes.</title>
        <authorList>
            <person name="Pandey R."/>
            <person name="Mueller A."/>
            <person name="Napoli C.A."/>
            <person name="Selinger D.A."/>
            <person name="Pikaard C.S."/>
            <person name="Richards E.J."/>
            <person name="Bender J."/>
            <person name="Mount D.W."/>
            <person name="Jorgensen R.A."/>
        </authorList>
    </citation>
    <scope>GENE FAMILY</scope>
    <scope>NOMENCLATURE</scope>
</reference>
<reference key="5">
    <citation type="journal article" date="2005" name="Proc. Natl. Acad. Sci. U.S.A.">
        <title>Histone acetylation affects expression of cellular patterning genes in the Arabidopsis root epidermis.</title>
        <authorList>
            <person name="Xu C.-R."/>
            <person name="Liu C."/>
            <person name="Wang Y.-L."/>
            <person name="Li L.-C."/>
            <person name="Chen W.-Q."/>
            <person name="Xu Z.-H."/>
            <person name="Bai S.-N."/>
        </authorList>
    </citation>
    <scope>FUNCTION</scope>
</reference>
<reference key="6">
    <citation type="journal article" date="2012" name="Mol. Cell. Proteomics">
        <title>Comparative large-scale characterisation of plant vs. mammal proteins reveals similar and idiosyncratic N-alpha acetylation features.</title>
        <authorList>
            <person name="Bienvenut W.V."/>
            <person name="Sumpton D."/>
            <person name="Martinez A."/>
            <person name="Lilla S."/>
            <person name="Espagne C."/>
            <person name="Meinnel T."/>
            <person name="Giglione C."/>
        </authorList>
    </citation>
    <scope>ACETYLATION [LARGE SCALE ANALYSIS] AT ALA-2</scope>
    <scope>CLEAVAGE OF INITIATOR METHIONINE [LARGE SCALE ANALYSIS]</scope>
    <scope>IDENTIFICATION BY MASS SPECTROMETRY [LARGE SCALE ANALYSIS]</scope>
</reference>
<reference key="7">
    <citation type="journal article" date="2012" name="PLoS ONE">
        <title>Subcellular localization of class II HDAs in Arabidopsis thaliana: nucleocytoplasmic shuttling of HDA15 is driven by light.</title>
        <authorList>
            <person name="Alinsug M.V."/>
            <person name="Chen F.F."/>
            <person name="Luo M."/>
            <person name="Tai R."/>
            <person name="Jiang L."/>
            <person name="Wu K."/>
        </authorList>
    </citation>
    <scope>SUBCELLULAR LOCATION</scope>
    <scope>TISSUE SPECIFICITY</scope>
</reference>
<reference key="8">
    <citation type="journal article" date="2015" name="Plant J.">
        <title>Regulation of flowering time by the histone deacetylase HDA5 in Arabidopsis.</title>
        <authorList>
            <person name="Luo M."/>
            <person name="Tai R."/>
            <person name="Yu C.W."/>
            <person name="Yang S."/>
            <person name="Chen C.Y."/>
            <person name="Lin W.D."/>
            <person name="Schmidt W."/>
            <person name="Wu K."/>
        </authorList>
    </citation>
    <scope>FUNCTION</scope>
    <scope>CATALYTIC ACTIVITY</scope>
    <scope>ACTIVITY REGULATION</scope>
    <scope>INTERACTION WITH HDA6</scope>
    <scope>DISRUPTION PHENOTYPE</scope>
    <scope>MUTAGENESIS OF ASP-198; HIS-200 AND ASP-291</scope>
</reference>
<name>HDA5_ARATH</name>
<organism>
    <name type="scientific">Arabidopsis thaliana</name>
    <name type="common">Mouse-ear cress</name>
    <dbReference type="NCBI Taxonomy" id="3702"/>
    <lineage>
        <taxon>Eukaryota</taxon>
        <taxon>Viridiplantae</taxon>
        <taxon>Streptophyta</taxon>
        <taxon>Embryophyta</taxon>
        <taxon>Tracheophyta</taxon>
        <taxon>Spermatophyta</taxon>
        <taxon>Magnoliopsida</taxon>
        <taxon>eudicotyledons</taxon>
        <taxon>Gunneridae</taxon>
        <taxon>Pentapetalae</taxon>
        <taxon>rosids</taxon>
        <taxon>malvids</taxon>
        <taxon>Brassicales</taxon>
        <taxon>Brassicaceae</taxon>
        <taxon>Camelineae</taxon>
        <taxon>Arabidopsis</taxon>
    </lineage>
</organism>
<dbReference type="EC" id="3.5.1.98" evidence="4"/>
<dbReference type="EMBL" id="AB006696">
    <property type="protein sequence ID" value="BAB10369.1"/>
    <property type="status" value="ALT_SEQ"/>
    <property type="molecule type" value="Genomic_DNA"/>
</dbReference>
<dbReference type="EMBL" id="AB006696">
    <property type="protein sequence ID" value="BAB10370.1"/>
    <property type="status" value="ALT_SEQ"/>
    <property type="molecule type" value="Genomic_DNA"/>
</dbReference>
<dbReference type="EMBL" id="CP002688">
    <property type="protein sequence ID" value="AED97417.1"/>
    <property type="molecule type" value="Genomic_DNA"/>
</dbReference>
<dbReference type="EMBL" id="AY090936">
    <property type="protein sequence ID" value="AAM13986.1"/>
    <property type="molecule type" value="mRNA"/>
</dbReference>
<dbReference type="EMBL" id="AY120784">
    <property type="protein sequence ID" value="AAM53342.1"/>
    <property type="molecule type" value="mRNA"/>
</dbReference>
<dbReference type="EMBL" id="BT000073">
    <property type="protein sequence ID" value="AAN15392.1"/>
    <property type="molecule type" value="mRNA"/>
</dbReference>
<dbReference type="RefSeq" id="NP_200914.2">
    <molecule id="Q8RX28-1"/>
    <property type="nucleotide sequence ID" value="NM_125499.5"/>
</dbReference>
<dbReference type="SMR" id="Q8RX28"/>
<dbReference type="BioGRID" id="21471">
    <property type="interactions" value="6"/>
</dbReference>
<dbReference type="FunCoup" id="Q8RX28">
    <property type="interactions" value="1799"/>
</dbReference>
<dbReference type="STRING" id="3702.Q8RX28"/>
<dbReference type="iPTMnet" id="Q8RX28"/>
<dbReference type="PaxDb" id="3702-AT5G61060.2"/>
<dbReference type="ProteomicsDB" id="230373">
    <molecule id="Q8RX28-1"/>
</dbReference>
<dbReference type="EnsemblPlants" id="AT5G61060.1">
    <molecule id="Q8RX28-1"/>
    <property type="protein sequence ID" value="AT5G61060.1"/>
    <property type="gene ID" value="AT5G61060"/>
</dbReference>
<dbReference type="GeneID" id="836227"/>
<dbReference type="Gramene" id="AT5G61060.1">
    <molecule id="Q8RX28-1"/>
    <property type="protein sequence ID" value="AT5G61060.1"/>
    <property type="gene ID" value="AT5G61060"/>
</dbReference>
<dbReference type="KEGG" id="ath:AT5G61060"/>
<dbReference type="Araport" id="AT5G61060"/>
<dbReference type="TAIR" id="AT5G61060">
    <property type="gene designation" value="HDA05"/>
</dbReference>
<dbReference type="eggNOG" id="KOG1343">
    <property type="taxonomic scope" value="Eukaryota"/>
</dbReference>
<dbReference type="InParanoid" id="Q8RX28"/>
<dbReference type="OMA" id="HNEAMGF"/>
<dbReference type="PhylomeDB" id="Q8RX28"/>
<dbReference type="PRO" id="PR:Q8RX28"/>
<dbReference type="Proteomes" id="UP000006548">
    <property type="component" value="Chromosome 5"/>
</dbReference>
<dbReference type="ExpressionAtlas" id="Q8RX28">
    <property type="expression patterns" value="baseline and differential"/>
</dbReference>
<dbReference type="GO" id="GO:0005737">
    <property type="term" value="C:cytoplasm"/>
    <property type="evidence" value="ECO:0000314"/>
    <property type="project" value="UniProtKB"/>
</dbReference>
<dbReference type="GO" id="GO:0000118">
    <property type="term" value="C:histone deacetylase complex"/>
    <property type="evidence" value="ECO:0000314"/>
    <property type="project" value="UniProtKB"/>
</dbReference>
<dbReference type="GO" id="GO:0005634">
    <property type="term" value="C:nucleus"/>
    <property type="evidence" value="ECO:0000314"/>
    <property type="project" value="UniProtKB"/>
</dbReference>
<dbReference type="GO" id="GO:0004407">
    <property type="term" value="F:histone deacetylase activity"/>
    <property type="evidence" value="ECO:0000314"/>
    <property type="project" value="UniProtKB"/>
</dbReference>
<dbReference type="GO" id="GO:0141221">
    <property type="term" value="F:histone deacetylase activity, hydrolytic mechanism"/>
    <property type="evidence" value="ECO:0007669"/>
    <property type="project" value="UniProtKB-EC"/>
</dbReference>
<dbReference type="GO" id="GO:0008270">
    <property type="term" value="F:zinc ion binding"/>
    <property type="evidence" value="ECO:0000250"/>
    <property type="project" value="UniProtKB"/>
</dbReference>
<dbReference type="GO" id="GO:0009908">
    <property type="term" value="P:flower development"/>
    <property type="evidence" value="ECO:0007669"/>
    <property type="project" value="UniProtKB-KW"/>
</dbReference>
<dbReference type="GO" id="GO:0045814">
    <property type="term" value="P:negative regulation of gene expression, epigenetic"/>
    <property type="evidence" value="ECO:0000314"/>
    <property type="project" value="UniProtKB"/>
</dbReference>
<dbReference type="GO" id="GO:0048510">
    <property type="term" value="P:regulation of timing of transition from vegetative to reproductive phase"/>
    <property type="evidence" value="ECO:0000315"/>
    <property type="project" value="UniProtKB"/>
</dbReference>
<dbReference type="FunFam" id="3.40.800.20:FF:000014">
    <property type="entry name" value="Histone deacetylase 15"/>
    <property type="match status" value="1"/>
</dbReference>
<dbReference type="FunFam" id="3.10.490.10:FF:000035">
    <property type="entry name" value="Histone deacetylase 5"/>
    <property type="match status" value="1"/>
</dbReference>
<dbReference type="Gene3D" id="3.10.490.10">
    <property type="entry name" value="Gamma-glutamyl cyclotransferase-like"/>
    <property type="match status" value="1"/>
</dbReference>
<dbReference type="Gene3D" id="3.40.800.20">
    <property type="entry name" value="Histone deacetylase domain"/>
    <property type="match status" value="1"/>
</dbReference>
<dbReference type="InterPro" id="IPR050284">
    <property type="entry name" value="HDAC_PDAC"/>
</dbReference>
<dbReference type="InterPro" id="IPR000286">
    <property type="entry name" value="His_deacetylse"/>
</dbReference>
<dbReference type="InterPro" id="IPR023801">
    <property type="entry name" value="His_deacetylse_dom"/>
</dbReference>
<dbReference type="InterPro" id="IPR037138">
    <property type="entry name" value="His_deacetylse_dom_sf"/>
</dbReference>
<dbReference type="InterPro" id="IPR023696">
    <property type="entry name" value="Ureohydrolase_dom_sf"/>
</dbReference>
<dbReference type="PANTHER" id="PTHR10625:SF25">
    <property type="entry name" value="HISTONE DEACETYLASE 18-RELATED"/>
    <property type="match status" value="1"/>
</dbReference>
<dbReference type="PANTHER" id="PTHR10625">
    <property type="entry name" value="HISTONE DEACETYLASE HDAC1-RELATED"/>
    <property type="match status" value="1"/>
</dbReference>
<dbReference type="Pfam" id="PF00850">
    <property type="entry name" value="Hist_deacetyl"/>
    <property type="match status" value="1"/>
</dbReference>
<dbReference type="PRINTS" id="PR01270">
    <property type="entry name" value="HDASUPER"/>
</dbReference>
<dbReference type="SUPFAM" id="SSF52768">
    <property type="entry name" value="Arginase/deacetylase"/>
    <property type="match status" value="1"/>
</dbReference>
<feature type="initiator methionine" description="Removed" evidence="10">
    <location>
        <position position="1"/>
    </location>
</feature>
<feature type="chain" id="PRO_0000280084" description="Histone deacetylase 5">
    <location>
        <begin position="2"/>
        <end position="660"/>
    </location>
</feature>
<feature type="region of interest" description="Histone deacetylase">
    <location>
        <begin position="26"/>
        <end position="349"/>
    </location>
</feature>
<feature type="active site" description="Proton donor/acceptor" evidence="1">
    <location>
        <position position="158"/>
    </location>
</feature>
<feature type="binding site" evidence="1">
    <location>
        <position position="198"/>
    </location>
    <ligand>
        <name>Zn(2+)</name>
        <dbReference type="ChEBI" id="CHEBI:29105"/>
    </ligand>
</feature>
<feature type="binding site" evidence="1">
    <location>
        <position position="200"/>
    </location>
    <ligand>
        <name>Zn(2+)</name>
        <dbReference type="ChEBI" id="CHEBI:29105"/>
    </ligand>
</feature>
<feature type="binding site" evidence="1">
    <location>
        <position position="291"/>
    </location>
    <ligand>
        <name>Zn(2+)</name>
        <dbReference type="ChEBI" id="CHEBI:29105"/>
    </ligand>
</feature>
<feature type="site" description="Polarizes the scissile carbonyl of the substrate" evidence="1">
    <location>
        <position position="331"/>
    </location>
</feature>
<feature type="modified residue" description="N-acetylalanine" evidence="10">
    <location>
        <position position="2"/>
    </location>
</feature>
<feature type="mutagenesis site" description="Loss of enzymatic activity." evidence="4">
    <original>D</original>
    <variation>A</variation>
    <location>
        <position position="198"/>
    </location>
</feature>
<feature type="mutagenesis site" description="Loss of enzymatic activity." evidence="4">
    <original>H</original>
    <variation>A</variation>
    <location>
        <position position="200"/>
    </location>
</feature>
<feature type="mutagenesis site" description="Loss of enzymatic activity." evidence="4">
    <original>D</original>
    <variation>A</variation>
    <location>
        <position position="291"/>
    </location>
</feature>
<gene>
    <name evidence="5" type="primary">HDA5</name>
    <name evidence="8" type="ordered locus">At5g61060</name>
    <name evidence="9" type="ORF">MAF19.7</name>
</gene>
<accession>Q8RX28</accession>
<accession>Q9FNQ7</accession>
<accession>Q9FNQ8</accession>